<evidence type="ECO:0000255" key="1">
    <source>
        <dbReference type="HAMAP-Rule" id="MF_01325"/>
    </source>
</evidence>
<evidence type="ECO:0000305" key="2"/>
<proteinExistence type="inferred from homology"/>
<accession>B4F1I4</accession>
<dbReference type="EMBL" id="AM942759">
    <property type="protein sequence ID" value="CAR46379.1"/>
    <property type="molecule type" value="Genomic_DNA"/>
</dbReference>
<dbReference type="RefSeq" id="WP_004246966.1">
    <property type="nucleotide sequence ID" value="NC_010554.1"/>
</dbReference>
<dbReference type="SMR" id="B4F1I4"/>
<dbReference type="EnsemblBacteria" id="CAR46379">
    <property type="protein sequence ID" value="CAR46379"/>
    <property type="gene ID" value="PMI3255"/>
</dbReference>
<dbReference type="GeneID" id="6800307"/>
<dbReference type="KEGG" id="pmr:PMI3255"/>
<dbReference type="eggNOG" id="COG0087">
    <property type="taxonomic scope" value="Bacteria"/>
</dbReference>
<dbReference type="HOGENOM" id="CLU_044142_4_1_6"/>
<dbReference type="Proteomes" id="UP000008319">
    <property type="component" value="Chromosome"/>
</dbReference>
<dbReference type="GO" id="GO:0022625">
    <property type="term" value="C:cytosolic large ribosomal subunit"/>
    <property type="evidence" value="ECO:0007669"/>
    <property type="project" value="TreeGrafter"/>
</dbReference>
<dbReference type="GO" id="GO:0019843">
    <property type="term" value="F:rRNA binding"/>
    <property type="evidence" value="ECO:0007669"/>
    <property type="project" value="UniProtKB-UniRule"/>
</dbReference>
<dbReference type="GO" id="GO:0003735">
    <property type="term" value="F:structural constituent of ribosome"/>
    <property type="evidence" value="ECO:0007669"/>
    <property type="project" value="InterPro"/>
</dbReference>
<dbReference type="GO" id="GO:0006412">
    <property type="term" value="P:translation"/>
    <property type="evidence" value="ECO:0007669"/>
    <property type="project" value="UniProtKB-UniRule"/>
</dbReference>
<dbReference type="FunFam" id="2.40.30.10:FF:000004">
    <property type="entry name" value="50S ribosomal protein L3"/>
    <property type="match status" value="1"/>
</dbReference>
<dbReference type="FunFam" id="3.30.160.810:FF:000001">
    <property type="entry name" value="50S ribosomal protein L3"/>
    <property type="match status" value="1"/>
</dbReference>
<dbReference type="Gene3D" id="3.30.160.810">
    <property type="match status" value="1"/>
</dbReference>
<dbReference type="Gene3D" id="2.40.30.10">
    <property type="entry name" value="Translation factors"/>
    <property type="match status" value="1"/>
</dbReference>
<dbReference type="HAMAP" id="MF_01325_B">
    <property type="entry name" value="Ribosomal_uL3_B"/>
    <property type="match status" value="1"/>
</dbReference>
<dbReference type="InterPro" id="IPR000597">
    <property type="entry name" value="Ribosomal_uL3"/>
</dbReference>
<dbReference type="InterPro" id="IPR019927">
    <property type="entry name" value="Ribosomal_uL3_bac/org-type"/>
</dbReference>
<dbReference type="InterPro" id="IPR019926">
    <property type="entry name" value="Ribosomal_uL3_CS"/>
</dbReference>
<dbReference type="InterPro" id="IPR009000">
    <property type="entry name" value="Transl_B-barrel_sf"/>
</dbReference>
<dbReference type="NCBIfam" id="TIGR03625">
    <property type="entry name" value="L3_bact"/>
    <property type="match status" value="1"/>
</dbReference>
<dbReference type="PANTHER" id="PTHR11229">
    <property type="entry name" value="50S RIBOSOMAL PROTEIN L3"/>
    <property type="match status" value="1"/>
</dbReference>
<dbReference type="PANTHER" id="PTHR11229:SF16">
    <property type="entry name" value="LARGE RIBOSOMAL SUBUNIT PROTEIN UL3C"/>
    <property type="match status" value="1"/>
</dbReference>
<dbReference type="Pfam" id="PF00297">
    <property type="entry name" value="Ribosomal_L3"/>
    <property type="match status" value="1"/>
</dbReference>
<dbReference type="SUPFAM" id="SSF50447">
    <property type="entry name" value="Translation proteins"/>
    <property type="match status" value="1"/>
</dbReference>
<dbReference type="PROSITE" id="PS00474">
    <property type="entry name" value="RIBOSOMAL_L3"/>
    <property type="match status" value="1"/>
</dbReference>
<comment type="function">
    <text evidence="1">One of the primary rRNA binding proteins, it binds directly near the 3'-end of the 23S rRNA, where it nucleates assembly of the 50S subunit.</text>
</comment>
<comment type="subunit">
    <text evidence="1">Part of the 50S ribosomal subunit. Forms a cluster with proteins L14 and L19.</text>
</comment>
<comment type="PTM">
    <text evidence="1">Methylated by PrmB.</text>
</comment>
<comment type="similarity">
    <text evidence="1">Belongs to the universal ribosomal protein uL3 family.</text>
</comment>
<reference key="1">
    <citation type="journal article" date="2008" name="J. Bacteriol.">
        <title>Complete genome sequence of uropathogenic Proteus mirabilis, a master of both adherence and motility.</title>
        <authorList>
            <person name="Pearson M.M."/>
            <person name="Sebaihia M."/>
            <person name="Churcher C."/>
            <person name="Quail M.A."/>
            <person name="Seshasayee A.S."/>
            <person name="Luscombe N.M."/>
            <person name="Abdellah Z."/>
            <person name="Arrosmith C."/>
            <person name="Atkin B."/>
            <person name="Chillingworth T."/>
            <person name="Hauser H."/>
            <person name="Jagels K."/>
            <person name="Moule S."/>
            <person name="Mungall K."/>
            <person name="Norbertczak H."/>
            <person name="Rabbinowitsch E."/>
            <person name="Walker D."/>
            <person name="Whithead S."/>
            <person name="Thomson N.R."/>
            <person name="Rather P.N."/>
            <person name="Parkhill J."/>
            <person name="Mobley H.L.T."/>
        </authorList>
    </citation>
    <scope>NUCLEOTIDE SEQUENCE [LARGE SCALE GENOMIC DNA]</scope>
    <source>
        <strain>HI4320</strain>
    </source>
</reference>
<protein>
    <recommendedName>
        <fullName evidence="1">Large ribosomal subunit protein uL3</fullName>
    </recommendedName>
    <alternativeName>
        <fullName evidence="2">50S ribosomal protein L3</fullName>
    </alternativeName>
</protein>
<organism>
    <name type="scientific">Proteus mirabilis (strain HI4320)</name>
    <dbReference type="NCBI Taxonomy" id="529507"/>
    <lineage>
        <taxon>Bacteria</taxon>
        <taxon>Pseudomonadati</taxon>
        <taxon>Pseudomonadota</taxon>
        <taxon>Gammaproteobacteria</taxon>
        <taxon>Enterobacterales</taxon>
        <taxon>Morganellaceae</taxon>
        <taxon>Proteus</taxon>
    </lineage>
</organism>
<feature type="chain" id="PRO_1000141903" description="Large ribosomal subunit protein uL3">
    <location>
        <begin position="1"/>
        <end position="209"/>
    </location>
</feature>
<feature type="modified residue" description="N5-methylglutamine" evidence="1">
    <location>
        <position position="150"/>
    </location>
</feature>
<sequence>MIGLVGKKVGMTRIFTEDGVSIPVTVIEIENNRVTQVKDLEKDGYRAIQVTTGSKKANRVLKPEAGHFAKAGVEAGRLLREFRLNEGEEYTVGQSISVEIFADVKKVDVTGTSKGKGFAGTVKRWNFRTQDATHGNSLSHRVPGSIGQNQTPGRVFKGKKMAGQLGNEQVTVQSLEVVRVDAERNLLLVKGAVPGATGSDLIVKPAVKA</sequence>
<keyword id="KW-0488">Methylation</keyword>
<keyword id="KW-1185">Reference proteome</keyword>
<keyword id="KW-0687">Ribonucleoprotein</keyword>
<keyword id="KW-0689">Ribosomal protein</keyword>
<keyword id="KW-0694">RNA-binding</keyword>
<keyword id="KW-0699">rRNA-binding</keyword>
<name>RL3_PROMH</name>
<gene>
    <name evidence="1" type="primary">rplC</name>
    <name type="ordered locus">PMI3255</name>
</gene>